<dbReference type="EC" id="3.1.11.6" evidence="1"/>
<dbReference type="EMBL" id="CP000025">
    <property type="protein sequence ID" value="AAW34959.1"/>
    <property type="molecule type" value="Genomic_DNA"/>
</dbReference>
<dbReference type="RefSeq" id="WP_011049661.1">
    <property type="nucleotide sequence ID" value="NC_003912.7"/>
</dbReference>
<dbReference type="SMR" id="Q5HWE6"/>
<dbReference type="KEGG" id="cjr:CJE0370"/>
<dbReference type="HOGENOM" id="CLU_023625_2_0_7"/>
<dbReference type="GO" id="GO:0005737">
    <property type="term" value="C:cytoplasm"/>
    <property type="evidence" value="ECO:0007669"/>
    <property type="project" value="UniProtKB-SubCell"/>
</dbReference>
<dbReference type="GO" id="GO:0009318">
    <property type="term" value="C:exodeoxyribonuclease VII complex"/>
    <property type="evidence" value="ECO:0007669"/>
    <property type="project" value="InterPro"/>
</dbReference>
<dbReference type="GO" id="GO:0008855">
    <property type="term" value="F:exodeoxyribonuclease VII activity"/>
    <property type="evidence" value="ECO:0007669"/>
    <property type="project" value="UniProtKB-UniRule"/>
</dbReference>
<dbReference type="GO" id="GO:0003676">
    <property type="term" value="F:nucleic acid binding"/>
    <property type="evidence" value="ECO:0007669"/>
    <property type="project" value="InterPro"/>
</dbReference>
<dbReference type="GO" id="GO:0006308">
    <property type="term" value="P:DNA catabolic process"/>
    <property type="evidence" value="ECO:0007669"/>
    <property type="project" value="UniProtKB-UniRule"/>
</dbReference>
<dbReference type="CDD" id="cd04489">
    <property type="entry name" value="ExoVII_LU_OBF"/>
    <property type="match status" value="1"/>
</dbReference>
<dbReference type="HAMAP" id="MF_00378">
    <property type="entry name" value="Exonuc_7_L"/>
    <property type="match status" value="1"/>
</dbReference>
<dbReference type="InterPro" id="IPR003753">
    <property type="entry name" value="Exonuc_VII_L"/>
</dbReference>
<dbReference type="InterPro" id="IPR020579">
    <property type="entry name" value="Exonuc_VII_lsu_C"/>
</dbReference>
<dbReference type="InterPro" id="IPR025824">
    <property type="entry name" value="OB-fold_nuc-bd_dom"/>
</dbReference>
<dbReference type="NCBIfam" id="TIGR00237">
    <property type="entry name" value="xseA"/>
    <property type="match status" value="1"/>
</dbReference>
<dbReference type="PANTHER" id="PTHR30008">
    <property type="entry name" value="EXODEOXYRIBONUCLEASE 7 LARGE SUBUNIT"/>
    <property type="match status" value="1"/>
</dbReference>
<dbReference type="PANTHER" id="PTHR30008:SF0">
    <property type="entry name" value="EXODEOXYRIBONUCLEASE 7 LARGE SUBUNIT"/>
    <property type="match status" value="1"/>
</dbReference>
<dbReference type="Pfam" id="PF02601">
    <property type="entry name" value="Exonuc_VII_L"/>
    <property type="match status" value="1"/>
</dbReference>
<dbReference type="Pfam" id="PF13742">
    <property type="entry name" value="tRNA_anti_2"/>
    <property type="match status" value="1"/>
</dbReference>
<name>EX7L_CAMJR</name>
<protein>
    <recommendedName>
        <fullName evidence="1">Exodeoxyribonuclease 7 large subunit</fullName>
        <ecNumber evidence="1">3.1.11.6</ecNumber>
    </recommendedName>
    <alternativeName>
        <fullName evidence="1">Exodeoxyribonuclease VII large subunit</fullName>
        <shortName evidence="1">Exonuclease VII large subunit</shortName>
    </alternativeName>
</protein>
<organism>
    <name type="scientific">Campylobacter jejuni (strain RM1221)</name>
    <dbReference type="NCBI Taxonomy" id="195099"/>
    <lineage>
        <taxon>Bacteria</taxon>
        <taxon>Pseudomonadati</taxon>
        <taxon>Campylobacterota</taxon>
        <taxon>Epsilonproteobacteria</taxon>
        <taxon>Campylobacterales</taxon>
        <taxon>Campylobacteraceae</taxon>
        <taxon>Campylobacter</taxon>
    </lineage>
</organism>
<reference key="1">
    <citation type="journal article" date="2005" name="PLoS Biol.">
        <title>Major structural differences and novel potential virulence mechanisms from the genomes of multiple Campylobacter species.</title>
        <authorList>
            <person name="Fouts D.E."/>
            <person name="Mongodin E.F."/>
            <person name="Mandrell R.E."/>
            <person name="Miller W.G."/>
            <person name="Rasko D.A."/>
            <person name="Ravel J."/>
            <person name="Brinkac L.M."/>
            <person name="DeBoy R.T."/>
            <person name="Parker C.T."/>
            <person name="Daugherty S.C."/>
            <person name="Dodson R.J."/>
            <person name="Durkin A.S."/>
            <person name="Madupu R."/>
            <person name="Sullivan S.A."/>
            <person name="Shetty J.U."/>
            <person name="Ayodeji M.A."/>
            <person name="Shvartsbeyn A."/>
            <person name="Schatz M.C."/>
            <person name="Badger J.H."/>
            <person name="Fraser C.M."/>
            <person name="Nelson K.E."/>
        </authorList>
    </citation>
    <scope>NUCLEOTIDE SEQUENCE [LARGE SCALE GENOMIC DNA]</scope>
    <source>
        <strain>RM1221</strain>
    </source>
</reference>
<proteinExistence type="inferred from homology"/>
<keyword id="KW-0963">Cytoplasm</keyword>
<keyword id="KW-0269">Exonuclease</keyword>
<keyword id="KW-0378">Hydrolase</keyword>
<keyword id="KW-0540">Nuclease</keyword>
<sequence length="387" mass="44115">MTPTELNLKAKALLETHFDDIVLSGEISKITLHGSGHWYFDLKDERSSIACAMFKGANLKVGFKPAVGNFLELCGSVSLYPESGRYQFIATSMKKAGFGDLEAQFLALKERLQKEGLFDPRFKKSLPKFPKKVGIITSKTSAALQDMLKLIHQKEYFLAKIYIFDALTQGNNAPFSLIRALKKADDMDLDVLIIARGGGSREDLFCFNDENLAREIFKAKTPIISAIGHEIDYVISDFVADFRAPTPSAAIDTLFYSKLDIEQSLDLMEEKLMQLWNYKIQNYENLLLNLSKFFKFNSLPKIIDEKIKQSHNIEKQLNHLLANQMRYNELKLDKLQNAYLQHENFFNKSKKFICIRKNGKIANLEDLKSDDIVILSSQTSQKEAKIL</sequence>
<gene>
    <name evidence="1" type="primary">xseA</name>
    <name type="ordered locus">CJE0370</name>
</gene>
<comment type="function">
    <text evidence="1">Bidirectionally degrades single-stranded DNA into large acid-insoluble oligonucleotides, which are then degraded further into small acid-soluble oligonucleotides.</text>
</comment>
<comment type="catalytic activity">
    <reaction evidence="1">
        <text>Exonucleolytic cleavage in either 5'- to 3'- or 3'- to 5'-direction to yield nucleoside 5'-phosphates.</text>
        <dbReference type="EC" id="3.1.11.6"/>
    </reaction>
</comment>
<comment type="subunit">
    <text evidence="1">Heterooligomer composed of large and small subunits.</text>
</comment>
<comment type="subcellular location">
    <subcellularLocation>
        <location evidence="1">Cytoplasm</location>
    </subcellularLocation>
</comment>
<comment type="similarity">
    <text evidence="1">Belongs to the XseA family.</text>
</comment>
<accession>Q5HWE6</accession>
<feature type="chain" id="PRO_0000273650" description="Exodeoxyribonuclease 7 large subunit">
    <location>
        <begin position="1"/>
        <end position="387"/>
    </location>
</feature>
<evidence type="ECO:0000255" key="1">
    <source>
        <dbReference type="HAMAP-Rule" id="MF_00378"/>
    </source>
</evidence>